<name>QUEC_ECOLI</name>
<protein>
    <recommendedName>
        <fullName>7-cyano-7-deazaguanine synthase</fullName>
        <ecNumber>6.3.4.20</ecNumber>
    </recommendedName>
    <alternativeName>
        <fullName>7-cyano-7-carbaguanine synthase</fullName>
    </alternativeName>
    <alternativeName>
        <fullName>PreQ(0) synthase</fullName>
    </alternativeName>
    <alternativeName>
        <fullName>Queuosine biosynthesis protein QueC</fullName>
    </alternativeName>
</protein>
<keyword id="KW-0067">ATP-binding</keyword>
<keyword id="KW-0436">Ligase</keyword>
<keyword id="KW-0479">Metal-binding</keyword>
<keyword id="KW-0547">Nucleotide-binding</keyword>
<keyword id="KW-0671">Queuosine biosynthesis</keyword>
<keyword id="KW-1185">Reference proteome</keyword>
<keyword id="KW-0862">Zinc</keyword>
<reference key="1">
    <citation type="submission" date="1996-10" db="EMBL/GenBank/DDBJ databases">
        <title>Nucleotide sequence analysis of the E. coli chromosome around the 10.0 min region.</title>
        <authorList>
            <person name="Hatada E."/>
            <person name="Ohmori H."/>
            <person name="Qiao Y."/>
            <person name="Tsuji M."/>
            <person name="Fukuda R."/>
        </authorList>
    </citation>
    <scope>NUCLEOTIDE SEQUENCE [GENOMIC DNA]</scope>
    <source>
        <strain>K12 / W3110 / ATCC 27325 / DSM 5911</strain>
    </source>
</reference>
<reference key="2">
    <citation type="submission" date="1997-01" db="EMBL/GenBank/DDBJ databases">
        <title>Sequence of minutes 4-25 of Escherichia coli.</title>
        <authorList>
            <person name="Chung E."/>
            <person name="Allen E."/>
            <person name="Araujo R."/>
            <person name="Aparicio A.M."/>
            <person name="Davis K."/>
            <person name="Duncan M."/>
            <person name="Federspiel N."/>
            <person name="Hyman R."/>
            <person name="Kalman S."/>
            <person name="Komp C."/>
            <person name="Kurdi O."/>
            <person name="Lew H."/>
            <person name="Lin D."/>
            <person name="Namath A."/>
            <person name="Oefner P."/>
            <person name="Roberts D."/>
            <person name="Schramm S."/>
            <person name="Davis R.W."/>
        </authorList>
    </citation>
    <scope>NUCLEOTIDE SEQUENCE [LARGE SCALE GENOMIC DNA]</scope>
    <source>
        <strain>K12 / MG1655 / ATCC 47076</strain>
    </source>
</reference>
<reference key="3">
    <citation type="journal article" date="1997" name="Science">
        <title>The complete genome sequence of Escherichia coli K-12.</title>
        <authorList>
            <person name="Blattner F.R."/>
            <person name="Plunkett G. III"/>
            <person name="Bloch C.A."/>
            <person name="Perna N.T."/>
            <person name="Burland V."/>
            <person name="Riley M."/>
            <person name="Collado-Vides J."/>
            <person name="Glasner J.D."/>
            <person name="Rode C.K."/>
            <person name="Mayhew G.F."/>
            <person name="Gregor J."/>
            <person name="Davis N.W."/>
            <person name="Kirkpatrick H.A."/>
            <person name="Goeden M.A."/>
            <person name="Rose D.J."/>
            <person name="Mau B."/>
            <person name="Shao Y."/>
        </authorList>
    </citation>
    <scope>NUCLEOTIDE SEQUENCE [LARGE SCALE GENOMIC DNA]</scope>
    <source>
        <strain>K12 / MG1655 / ATCC 47076</strain>
    </source>
</reference>
<reference key="4">
    <citation type="journal article" date="2006" name="Mol. Syst. Biol.">
        <title>Highly accurate genome sequences of Escherichia coli K-12 strains MG1655 and W3110.</title>
        <authorList>
            <person name="Hayashi K."/>
            <person name="Morooka N."/>
            <person name="Yamamoto Y."/>
            <person name="Fujita K."/>
            <person name="Isono K."/>
            <person name="Choi S."/>
            <person name="Ohtsubo E."/>
            <person name="Baba T."/>
            <person name="Wanner B.L."/>
            <person name="Mori H."/>
            <person name="Horiuchi T."/>
        </authorList>
    </citation>
    <scope>NUCLEOTIDE SEQUENCE [LARGE SCALE GENOMIC DNA]</scope>
    <source>
        <strain>K12 / W3110 / ATCC 27325 / DSM 5911</strain>
    </source>
</reference>
<reference key="5">
    <citation type="journal article" date="2005" name="J. Bacteriol.">
        <title>Genetic analysis identifies a function for the queC (ybaX) gene product at an initial step in the queuosine biosynthetic pathway in Escherichia coli.</title>
        <authorList>
            <person name="Gaur R."/>
            <person name="Varshney U."/>
        </authorList>
    </citation>
    <scope>FUNCTION IN QUEUOSINE BIOSYNTHESIS</scope>
    <source>
        <strain>ATCC 33694 / HB101</strain>
    </source>
</reference>
<evidence type="ECO:0000250" key="1"/>
<evidence type="ECO:0000269" key="2">
    <source>
    </source>
</evidence>
<evidence type="ECO:0000305" key="3"/>
<accession>P77756</accession>
<accession>Q2MBY2</accession>
<dbReference type="EC" id="6.3.4.20"/>
<dbReference type="EMBL" id="D82943">
    <property type="protein sequence ID" value="BAA11648.1"/>
    <property type="molecule type" value="Genomic_DNA"/>
</dbReference>
<dbReference type="EMBL" id="U82664">
    <property type="protein sequence ID" value="AAB40200.1"/>
    <property type="molecule type" value="Genomic_DNA"/>
</dbReference>
<dbReference type="EMBL" id="U00096">
    <property type="protein sequence ID" value="AAC73547.1"/>
    <property type="molecule type" value="Genomic_DNA"/>
</dbReference>
<dbReference type="EMBL" id="AP009048">
    <property type="protein sequence ID" value="BAE76224.1"/>
    <property type="molecule type" value="Genomic_DNA"/>
</dbReference>
<dbReference type="PIR" id="D64774">
    <property type="entry name" value="D64774"/>
</dbReference>
<dbReference type="RefSeq" id="NP_414978.1">
    <property type="nucleotide sequence ID" value="NC_000913.3"/>
</dbReference>
<dbReference type="RefSeq" id="WP_000817220.1">
    <property type="nucleotide sequence ID" value="NZ_SSZK01000009.1"/>
</dbReference>
<dbReference type="SMR" id="P77756"/>
<dbReference type="BioGRID" id="4262187">
    <property type="interactions" value="71"/>
</dbReference>
<dbReference type="DIP" id="DIP-11311N"/>
<dbReference type="FunCoup" id="P77756">
    <property type="interactions" value="223"/>
</dbReference>
<dbReference type="IntAct" id="P77756">
    <property type="interactions" value="14"/>
</dbReference>
<dbReference type="STRING" id="511145.b0444"/>
<dbReference type="jPOST" id="P77756"/>
<dbReference type="PaxDb" id="511145-b0444"/>
<dbReference type="EnsemblBacteria" id="AAC73547">
    <property type="protein sequence ID" value="AAC73547"/>
    <property type="gene ID" value="b0444"/>
</dbReference>
<dbReference type="GeneID" id="947034"/>
<dbReference type="KEGG" id="ecj:JW0434"/>
<dbReference type="KEGG" id="eco:b0444"/>
<dbReference type="KEGG" id="ecoc:C3026_02175"/>
<dbReference type="PATRIC" id="fig|1411691.4.peg.1832"/>
<dbReference type="EchoBASE" id="EB3041"/>
<dbReference type="eggNOG" id="COG0603">
    <property type="taxonomic scope" value="Bacteria"/>
</dbReference>
<dbReference type="HOGENOM" id="CLU_081854_0_0_6"/>
<dbReference type="InParanoid" id="P77756"/>
<dbReference type="OMA" id="VWVPNRN"/>
<dbReference type="OrthoDB" id="9789567at2"/>
<dbReference type="PhylomeDB" id="P77756"/>
<dbReference type="BioCyc" id="EcoCyc:G6245-MONOMER"/>
<dbReference type="BioCyc" id="MetaCyc:G6245-MONOMER"/>
<dbReference type="UniPathway" id="UPA00391"/>
<dbReference type="PRO" id="PR:P77756"/>
<dbReference type="Proteomes" id="UP000000625">
    <property type="component" value="Chromosome"/>
</dbReference>
<dbReference type="GO" id="GO:0005524">
    <property type="term" value="F:ATP binding"/>
    <property type="evidence" value="ECO:0007669"/>
    <property type="project" value="UniProtKB-UniRule"/>
</dbReference>
<dbReference type="GO" id="GO:0016879">
    <property type="term" value="F:ligase activity, forming carbon-nitrogen bonds"/>
    <property type="evidence" value="ECO:0007669"/>
    <property type="project" value="UniProtKB-UniRule"/>
</dbReference>
<dbReference type="GO" id="GO:0008270">
    <property type="term" value="F:zinc ion binding"/>
    <property type="evidence" value="ECO:0007669"/>
    <property type="project" value="UniProtKB-UniRule"/>
</dbReference>
<dbReference type="GO" id="GO:0008616">
    <property type="term" value="P:queuosine biosynthetic process"/>
    <property type="evidence" value="ECO:0000269"/>
    <property type="project" value="EcoCyc"/>
</dbReference>
<dbReference type="CDD" id="cd01995">
    <property type="entry name" value="QueC-like"/>
    <property type="match status" value="1"/>
</dbReference>
<dbReference type="FunFam" id="3.40.50.620:FF:000017">
    <property type="entry name" value="7-cyano-7-deazaguanine synthase"/>
    <property type="match status" value="1"/>
</dbReference>
<dbReference type="Gene3D" id="3.40.50.620">
    <property type="entry name" value="HUPs"/>
    <property type="match status" value="1"/>
</dbReference>
<dbReference type="HAMAP" id="MF_01633">
    <property type="entry name" value="QueC"/>
    <property type="match status" value="1"/>
</dbReference>
<dbReference type="InterPro" id="IPR018317">
    <property type="entry name" value="QueC"/>
</dbReference>
<dbReference type="InterPro" id="IPR014729">
    <property type="entry name" value="Rossmann-like_a/b/a_fold"/>
</dbReference>
<dbReference type="NCBIfam" id="TIGR00364">
    <property type="entry name" value="7-cyano-7-deazaguanine synthase QueC"/>
    <property type="match status" value="1"/>
</dbReference>
<dbReference type="NCBIfam" id="NF008317">
    <property type="entry name" value="PRK11106.1"/>
    <property type="match status" value="1"/>
</dbReference>
<dbReference type="PANTHER" id="PTHR42914">
    <property type="entry name" value="7-CYANO-7-DEAZAGUANINE SYNTHASE"/>
    <property type="match status" value="1"/>
</dbReference>
<dbReference type="PANTHER" id="PTHR42914:SF1">
    <property type="entry name" value="7-CYANO-7-DEAZAGUANINE SYNTHASE"/>
    <property type="match status" value="1"/>
</dbReference>
<dbReference type="Pfam" id="PF06508">
    <property type="entry name" value="QueC"/>
    <property type="match status" value="1"/>
</dbReference>
<dbReference type="PIRSF" id="PIRSF006293">
    <property type="entry name" value="ExsB"/>
    <property type="match status" value="1"/>
</dbReference>
<dbReference type="SUPFAM" id="SSF52402">
    <property type="entry name" value="Adenine nucleotide alpha hydrolases-like"/>
    <property type="match status" value="1"/>
</dbReference>
<feature type="chain" id="PRO_0000168631" description="7-cyano-7-deazaguanine synthase">
    <location>
        <begin position="1"/>
        <end position="231"/>
    </location>
</feature>
<feature type="binding site" evidence="1">
    <location>
        <begin position="8"/>
        <end position="18"/>
    </location>
    <ligand>
        <name>ATP</name>
        <dbReference type="ChEBI" id="CHEBI:30616"/>
    </ligand>
</feature>
<feature type="binding site" evidence="1">
    <location>
        <position position="188"/>
    </location>
    <ligand>
        <name>Zn(2+)</name>
        <dbReference type="ChEBI" id="CHEBI:29105"/>
    </ligand>
</feature>
<feature type="binding site" evidence="1">
    <location>
        <position position="197"/>
    </location>
    <ligand>
        <name>Zn(2+)</name>
        <dbReference type="ChEBI" id="CHEBI:29105"/>
    </ligand>
</feature>
<feature type="binding site" evidence="1">
    <location>
        <position position="200"/>
    </location>
    <ligand>
        <name>Zn(2+)</name>
        <dbReference type="ChEBI" id="CHEBI:29105"/>
    </ligand>
</feature>
<feature type="binding site" evidence="1">
    <location>
        <position position="203"/>
    </location>
    <ligand>
        <name>Zn(2+)</name>
        <dbReference type="ChEBI" id="CHEBI:29105"/>
    </ligand>
</feature>
<gene>
    <name type="primary">queC</name>
    <name type="synonym">ybaX</name>
    <name type="ordered locus">b0444</name>
    <name type="ordered locus">JW0434</name>
</gene>
<organism>
    <name type="scientific">Escherichia coli (strain K12)</name>
    <dbReference type="NCBI Taxonomy" id="83333"/>
    <lineage>
        <taxon>Bacteria</taxon>
        <taxon>Pseudomonadati</taxon>
        <taxon>Pseudomonadota</taxon>
        <taxon>Gammaproteobacteria</taxon>
        <taxon>Enterobacterales</taxon>
        <taxon>Enterobacteriaceae</taxon>
        <taxon>Escherichia</taxon>
    </lineage>
</organism>
<sequence>MKRAVVVFSGGQDSTTCLVQALQQYDEVHCVTFDYGQRHRAEIDVARELALKLGARAHKVLDVTLLNELAVSSLTRDSIPVPDYEPEADGIPNTFVPGRNILFLTLAAIYAYQVKAEAVITGVCETDFSGYPDCRDEFVKALNHAVSLGMAKDIRFETPLMWIDKAETWALADYYGKLDLVRNETLTCYNGFKGDGCGHCAACNLRANGLNHYLADKPTVMAAMKQKTGLR</sequence>
<comment type="function">
    <text evidence="1 2">Catalyzes the ATP-dependent conversion of 7-carboxy-7-deazaguanine (CDG) to 7-cyano-7-deazaguanine (preQ(0)).</text>
</comment>
<comment type="catalytic activity">
    <reaction>
        <text>7-carboxy-7-deazaguanine + NH4(+) + ATP = 7-cyano-7-deazaguanine + ADP + phosphate + H2O + H(+)</text>
        <dbReference type="Rhea" id="RHEA:27982"/>
        <dbReference type="ChEBI" id="CHEBI:15377"/>
        <dbReference type="ChEBI" id="CHEBI:15378"/>
        <dbReference type="ChEBI" id="CHEBI:28938"/>
        <dbReference type="ChEBI" id="CHEBI:30616"/>
        <dbReference type="ChEBI" id="CHEBI:43474"/>
        <dbReference type="ChEBI" id="CHEBI:45075"/>
        <dbReference type="ChEBI" id="CHEBI:61036"/>
        <dbReference type="ChEBI" id="CHEBI:456216"/>
        <dbReference type="EC" id="6.3.4.20"/>
    </reaction>
</comment>
<comment type="cofactor">
    <cofactor evidence="1">
        <name>Zn(2+)</name>
        <dbReference type="ChEBI" id="CHEBI:29105"/>
    </cofactor>
    <text evidence="1">Binds 1 zinc ion per subunit.</text>
</comment>
<comment type="pathway">
    <text>Purine metabolism; 7-cyano-7-deazaguanine biosynthesis.</text>
</comment>
<comment type="interaction">
    <interactant intactId="EBI-560024">
        <id>P77756</id>
    </interactant>
    <interactant intactId="EBI-301077">
        <id>P0CE47</id>
        <label>tufA</label>
    </interactant>
    <organismsDiffer>false</organismsDiffer>
    <experiments>3</experiments>
</comment>
<comment type="similarity">
    <text evidence="3">Belongs to the QueC family.</text>
</comment>
<proteinExistence type="evidence at protein level"/>